<dbReference type="EMBL" id="AP009380">
    <property type="protein sequence ID" value="BAG34383.1"/>
    <property type="molecule type" value="Genomic_DNA"/>
</dbReference>
<dbReference type="RefSeq" id="WP_010956447.1">
    <property type="nucleotide sequence ID" value="NZ_CP025930.1"/>
</dbReference>
<dbReference type="SMR" id="B2RLY8"/>
<dbReference type="GeneID" id="57239592"/>
<dbReference type="KEGG" id="pgn:PGN_1864"/>
<dbReference type="eggNOG" id="COG0185">
    <property type="taxonomic scope" value="Bacteria"/>
</dbReference>
<dbReference type="HOGENOM" id="CLU_144911_0_1_10"/>
<dbReference type="OrthoDB" id="9797833at2"/>
<dbReference type="BioCyc" id="PGIN431947:G1G2V-2078-MONOMER"/>
<dbReference type="Proteomes" id="UP000008842">
    <property type="component" value="Chromosome"/>
</dbReference>
<dbReference type="GO" id="GO:0005737">
    <property type="term" value="C:cytoplasm"/>
    <property type="evidence" value="ECO:0007669"/>
    <property type="project" value="UniProtKB-ARBA"/>
</dbReference>
<dbReference type="GO" id="GO:0015935">
    <property type="term" value="C:small ribosomal subunit"/>
    <property type="evidence" value="ECO:0007669"/>
    <property type="project" value="InterPro"/>
</dbReference>
<dbReference type="GO" id="GO:0019843">
    <property type="term" value="F:rRNA binding"/>
    <property type="evidence" value="ECO:0007669"/>
    <property type="project" value="UniProtKB-UniRule"/>
</dbReference>
<dbReference type="GO" id="GO:0003735">
    <property type="term" value="F:structural constituent of ribosome"/>
    <property type="evidence" value="ECO:0007669"/>
    <property type="project" value="InterPro"/>
</dbReference>
<dbReference type="GO" id="GO:0000028">
    <property type="term" value="P:ribosomal small subunit assembly"/>
    <property type="evidence" value="ECO:0007669"/>
    <property type="project" value="TreeGrafter"/>
</dbReference>
<dbReference type="GO" id="GO:0006412">
    <property type="term" value="P:translation"/>
    <property type="evidence" value="ECO:0007669"/>
    <property type="project" value="UniProtKB-UniRule"/>
</dbReference>
<dbReference type="FunFam" id="3.30.860.10:FF:000001">
    <property type="entry name" value="30S ribosomal protein S19"/>
    <property type="match status" value="1"/>
</dbReference>
<dbReference type="Gene3D" id="3.30.860.10">
    <property type="entry name" value="30s Ribosomal Protein S19, Chain A"/>
    <property type="match status" value="1"/>
</dbReference>
<dbReference type="HAMAP" id="MF_00531">
    <property type="entry name" value="Ribosomal_uS19"/>
    <property type="match status" value="1"/>
</dbReference>
<dbReference type="InterPro" id="IPR002222">
    <property type="entry name" value="Ribosomal_uS19"/>
</dbReference>
<dbReference type="InterPro" id="IPR005732">
    <property type="entry name" value="Ribosomal_uS19_bac-type"/>
</dbReference>
<dbReference type="InterPro" id="IPR020934">
    <property type="entry name" value="Ribosomal_uS19_CS"/>
</dbReference>
<dbReference type="InterPro" id="IPR023575">
    <property type="entry name" value="Ribosomal_uS19_SF"/>
</dbReference>
<dbReference type="NCBIfam" id="TIGR01050">
    <property type="entry name" value="rpsS_bact"/>
    <property type="match status" value="1"/>
</dbReference>
<dbReference type="PANTHER" id="PTHR11880">
    <property type="entry name" value="RIBOSOMAL PROTEIN S19P FAMILY MEMBER"/>
    <property type="match status" value="1"/>
</dbReference>
<dbReference type="PANTHER" id="PTHR11880:SF8">
    <property type="entry name" value="SMALL RIBOSOMAL SUBUNIT PROTEIN US19M"/>
    <property type="match status" value="1"/>
</dbReference>
<dbReference type="Pfam" id="PF00203">
    <property type="entry name" value="Ribosomal_S19"/>
    <property type="match status" value="1"/>
</dbReference>
<dbReference type="PIRSF" id="PIRSF002144">
    <property type="entry name" value="Ribosomal_S19"/>
    <property type="match status" value="1"/>
</dbReference>
<dbReference type="PRINTS" id="PR00975">
    <property type="entry name" value="RIBOSOMALS19"/>
</dbReference>
<dbReference type="SUPFAM" id="SSF54570">
    <property type="entry name" value="Ribosomal protein S19"/>
    <property type="match status" value="1"/>
</dbReference>
<dbReference type="PROSITE" id="PS00323">
    <property type="entry name" value="RIBOSOMAL_S19"/>
    <property type="match status" value="1"/>
</dbReference>
<accession>B2RLY8</accession>
<name>RS19_PORG3</name>
<protein>
    <recommendedName>
        <fullName evidence="1">Small ribosomal subunit protein uS19</fullName>
    </recommendedName>
    <alternativeName>
        <fullName evidence="2">30S ribosomal protein S19</fullName>
    </alternativeName>
</protein>
<gene>
    <name evidence="1" type="primary">rpsS</name>
    <name type="ordered locus">PGN_1864</name>
</gene>
<feature type="chain" id="PRO_1000128017" description="Small ribosomal subunit protein uS19">
    <location>
        <begin position="1"/>
        <end position="89"/>
    </location>
</feature>
<organism>
    <name type="scientific">Porphyromonas gingivalis (strain ATCC 33277 / DSM 20709 / CIP 103683 / JCM 12257 / NCTC 11834 / 2561)</name>
    <dbReference type="NCBI Taxonomy" id="431947"/>
    <lineage>
        <taxon>Bacteria</taxon>
        <taxon>Pseudomonadati</taxon>
        <taxon>Bacteroidota</taxon>
        <taxon>Bacteroidia</taxon>
        <taxon>Bacteroidales</taxon>
        <taxon>Porphyromonadaceae</taxon>
        <taxon>Porphyromonas</taxon>
    </lineage>
</organism>
<evidence type="ECO:0000255" key="1">
    <source>
        <dbReference type="HAMAP-Rule" id="MF_00531"/>
    </source>
</evidence>
<evidence type="ECO:0000305" key="2"/>
<keyword id="KW-0687">Ribonucleoprotein</keyword>
<keyword id="KW-0689">Ribosomal protein</keyword>
<keyword id="KW-0694">RNA-binding</keyword>
<keyword id="KW-0699">rRNA-binding</keyword>
<reference key="1">
    <citation type="journal article" date="2008" name="DNA Res.">
        <title>Determination of the genome sequence of Porphyromonas gingivalis strain ATCC 33277 and genomic comparison with strain W83 revealed extensive genome rearrangements in P. gingivalis.</title>
        <authorList>
            <person name="Naito M."/>
            <person name="Hirakawa H."/>
            <person name="Yamashita A."/>
            <person name="Ohara N."/>
            <person name="Shoji M."/>
            <person name="Yukitake H."/>
            <person name="Nakayama K."/>
            <person name="Toh H."/>
            <person name="Yoshimura F."/>
            <person name="Kuhara S."/>
            <person name="Hattori M."/>
            <person name="Hayashi T."/>
            <person name="Nakayama K."/>
        </authorList>
    </citation>
    <scope>NUCLEOTIDE SEQUENCE [LARGE SCALE GENOMIC DNA]</scope>
    <source>
        <strain>ATCC 33277 / DSM 20709 / CIP 103683 / JCM 12257 / NCTC 11834 / 2561</strain>
    </source>
</reference>
<proteinExistence type="inferred from homology"/>
<comment type="function">
    <text evidence="1">Protein S19 forms a complex with S13 that binds strongly to the 16S ribosomal RNA.</text>
</comment>
<comment type="similarity">
    <text evidence="1">Belongs to the universal ribosomal protein uS19 family.</text>
</comment>
<sequence>MSRSLKKGPYINLKLEKKVLAMNESGKKAVIKTWARASMISPDFVGHTIAVHNGNKFIPVFVTENMVGHKLGEFSPTRTFRGHAGNKKK</sequence>